<accession>A1W1Q6</accession>
<sequence>MNNIVHKLKTLVLNEAFGGVLLIVCTLLALLVQNGSFSEHYREFLNLKVGFSVGEFELNKPFLLWINDGLISIFFFAIGLELKKEFLHGDFKNPKNIVLPFMAALGGILIPAMLFVLVNIGDAYTLKGWAIPTATDTAFALAILMMCGKHIPSSLKIFLLSLAIFDDVGAILIIAIFYTTKLSIVAFVVAGIAILAMLVLNILGITRKSFYFICSVILWISVLKSGVHATLAGIITAFFIPMQTKNGEAFLEEIYESLKFWLAFVILPLFAFANAGVNLSNIDIGAIFSGVSVGIFLGLFVGKQAGVFLFSYLAIRFKFAALPQGSNLKQLYGVCILTGIGFTMSLFIDGLAYEVSDIFNYADNLAILIASFCSGIWGFIYLKFFATRS</sequence>
<feature type="chain" id="PRO_0000334261" description="Na(+)/H(+) antiporter NhaA 1">
    <location>
        <begin position="1"/>
        <end position="389"/>
    </location>
</feature>
<feature type="transmembrane region" description="Helical" evidence="1">
    <location>
        <begin position="12"/>
        <end position="32"/>
    </location>
</feature>
<feature type="transmembrane region" description="Helical" evidence="1">
    <location>
        <begin position="62"/>
        <end position="82"/>
    </location>
</feature>
<feature type="transmembrane region" description="Helical" evidence="1">
    <location>
        <begin position="97"/>
        <end position="117"/>
    </location>
</feature>
<feature type="transmembrane region" description="Helical" evidence="1">
    <location>
        <begin position="128"/>
        <end position="148"/>
    </location>
</feature>
<feature type="transmembrane region" description="Helical" evidence="1">
    <location>
        <begin position="157"/>
        <end position="177"/>
    </location>
</feature>
<feature type="transmembrane region" description="Helical" evidence="1">
    <location>
        <begin position="184"/>
        <end position="204"/>
    </location>
</feature>
<feature type="transmembrane region" description="Helical" evidence="1">
    <location>
        <begin position="220"/>
        <end position="240"/>
    </location>
</feature>
<feature type="transmembrane region" description="Helical" evidence="1">
    <location>
        <begin position="260"/>
        <end position="280"/>
    </location>
</feature>
<feature type="transmembrane region" description="Helical" evidence="1">
    <location>
        <begin position="282"/>
        <end position="302"/>
    </location>
</feature>
<feature type="transmembrane region" description="Helical" evidence="1">
    <location>
        <begin position="305"/>
        <end position="325"/>
    </location>
</feature>
<feature type="transmembrane region" description="Helical" evidence="1">
    <location>
        <begin position="331"/>
        <end position="351"/>
    </location>
</feature>
<feature type="transmembrane region" description="Helical" evidence="1">
    <location>
        <begin position="365"/>
        <end position="385"/>
    </location>
</feature>
<evidence type="ECO:0000255" key="1">
    <source>
        <dbReference type="HAMAP-Rule" id="MF_01844"/>
    </source>
</evidence>
<protein>
    <recommendedName>
        <fullName evidence="1">Na(+)/H(+) antiporter NhaA 1</fullName>
    </recommendedName>
    <alternativeName>
        <fullName evidence="1">Sodium/proton antiporter NhaA 1</fullName>
    </alternativeName>
</protein>
<keyword id="KW-0050">Antiport</keyword>
<keyword id="KW-0997">Cell inner membrane</keyword>
<keyword id="KW-1003">Cell membrane</keyword>
<keyword id="KW-0406">Ion transport</keyword>
<keyword id="KW-0472">Membrane</keyword>
<keyword id="KW-0915">Sodium</keyword>
<keyword id="KW-0739">Sodium transport</keyword>
<keyword id="KW-0812">Transmembrane</keyword>
<keyword id="KW-1133">Transmembrane helix</keyword>
<keyword id="KW-0813">Transport</keyword>
<reference key="1">
    <citation type="submission" date="2006-12" db="EMBL/GenBank/DDBJ databases">
        <authorList>
            <person name="Fouts D.E."/>
            <person name="Nelson K.E."/>
            <person name="Sebastian Y."/>
        </authorList>
    </citation>
    <scope>NUCLEOTIDE SEQUENCE [LARGE SCALE GENOMIC DNA]</scope>
    <source>
        <strain>81-176</strain>
    </source>
</reference>
<comment type="function">
    <text evidence="1">Na(+)/H(+) antiporter that extrudes sodium in exchange for external protons.</text>
</comment>
<comment type="catalytic activity">
    <reaction evidence="1">
        <text>Na(+)(in) + 2 H(+)(out) = Na(+)(out) + 2 H(+)(in)</text>
        <dbReference type="Rhea" id="RHEA:29251"/>
        <dbReference type="ChEBI" id="CHEBI:15378"/>
        <dbReference type="ChEBI" id="CHEBI:29101"/>
    </reaction>
    <physiologicalReaction direction="left-to-right" evidence="1">
        <dbReference type="Rhea" id="RHEA:29252"/>
    </physiologicalReaction>
</comment>
<comment type="subcellular location">
    <subcellularLocation>
        <location evidence="1">Cell inner membrane</location>
        <topology evidence="1">Multi-pass membrane protein</topology>
    </subcellularLocation>
</comment>
<comment type="similarity">
    <text evidence="1">Belongs to the NhaA Na(+)/H(+) (TC 2.A.33) antiporter family.</text>
</comment>
<dbReference type="EMBL" id="CP000538">
    <property type="protein sequence ID" value="EAQ72855.1"/>
    <property type="molecule type" value="Genomic_DNA"/>
</dbReference>
<dbReference type="SMR" id="A1W1Q6"/>
<dbReference type="KEGG" id="cjj:CJJ81176_1645"/>
<dbReference type="eggNOG" id="COG3004">
    <property type="taxonomic scope" value="Bacteria"/>
</dbReference>
<dbReference type="HOGENOM" id="CLU_015803_1_0_7"/>
<dbReference type="Proteomes" id="UP000000646">
    <property type="component" value="Chromosome"/>
</dbReference>
<dbReference type="GO" id="GO:0005886">
    <property type="term" value="C:plasma membrane"/>
    <property type="evidence" value="ECO:0007669"/>
    <property type="project" value="UniProtKB-SubCell"/>
</dbReference>
<dbReference type="GO" id="GO:0015385">
    <property type="term" value="F:sodium:proton antiporter activity"/>
    <property type="evidence" value="ECO:0007669"/>
    <property type="project" value="TreeGrafter"/>
</dbReference>
<dbReference type="GO" id="GO:0006885">
    <property type="term" value="P:regulation of pH"/>
    <property type="evidence" value="ECO:0007669"/>
    <property type="project" value="InterPro"/>
</dbReference>
<dbReference type="Gene3D" id="1.20.1530.10">
    <property type="entry name" value="Na+/H+ antiporter like domain"/>
    <property type="match status" value="1"/>
</dbReference>
<dbReference type="HAMAP" id="MF_01844">
    <property type="entry name" value="NhaA"/>
    <property type="match status" value="1"/>
</dbReference>
<dbReference type="InterPro" id="IPR023171">
    <property type="entry name" value="Na/H_antiporter_dom_sf"/>
</dbReference>
<dbReference type="InterPro" id="IPR004670">
    <property type="entry name" value="NhaA"/>
</dbReference>
<dbReference type="NCBIfam" id="TIGR00773">
    <property type="entry name" value="NhaA"/>
    <property type="match status" value="1"/>
</dbReference>
<dbReference type="NCBIfam" id="NF007111">
    <property type="entry name" value="PRK09560.1"/>
    <property type="match status" value="1"/>
</dbReference>
<dbReference type="NCBIfam" id="NF007112">
    <property type="entry name" value="PRK09561.1"/>
    <property type="match status" value="1"/>
</dbReference>
<dbReference type="PANTHER" id="PTHR30341:SF0">
    <property type="entry name" value="NA(+)_H(+) ANTIPORTER NHAA"/>
    <property type="match status" value="1"/>
</dbReference>
<dbReference type="PANTHER" id="PTHR30341">
    <property type="entry name" value="SODIUM ION/PROTON ANTIPORTER NHAA-RELATED"/>
    <property type="match status" value="1"/>
</dbReference>
<dbReference type="Pfam" id="PF06965">
    <property type="entry name" value="Na_H_antiport_1"/>
    <property type="match status" value="1"/>
</dbReference>
<name>NHAA1_CAMJJ</name>
<proteinExistence type="inferred from homology"/>
<gene>
    <name evidence="1" type="primary">nhaA1</name>
    <name type="ordered locus">CJJ81176_1645</name>
</gene>
<organism>
    <name type="scientific">Campylobacter jejuni subsp. jejuni serotype O:23/36 (strain 81-176)</name>
    <dbReference type="NCBI Taxonomy" id="354242"/>
    <lineage>
        <taxon>Bacteria</taxon>
        <taxon>Pseudomonadati</taxon>
        <taxon>Campylobacterota</taxon>
        <taxon>Epsilonproteobacteria</taxon>
        <taxon>Campylobacterales</taxon>
        <taxon>Campylobacteraceae</taxon>
        <taxon>Campylobacter</taxon>
    </lineage>
</organism>